<reference key="1">
    <citation type="journal article" date="2003" name="Proc. Natl. Acad. Sci. U.S.A.">
        <title>The complete genome sequence of Mycobacterium bovis.</title>
        <authorList>
            <person name="Garnier T."/>
            <person name="Eiglmeier K."/>
            <person name="Camus J.-C."/>
            <person name="Medina N."/>
            <person name="Mansoor H."/>
            <person name="Pryor M."/>
            <person name="Duthoy S."/>
            <person name="Grondin S."/>
            <person name="Lacroix C."/>
            <person name="Monsempe C."/>
            <person name="Simon S."/>
            <person name="Harris B."/>
            <person name="Atkin R."/>
            <person name="Doggett J."/>
            <person name="Mayes R."/>
            <person name="Keating L."/>
            <person name="Wheeler P.R."/>
            <person name="Parkhill J."/>
            <person name="Barrell B.G."/>
            <person name="Cole S.T."/>
            <person name="Gordon S.V."/>
            <person name="Hewinson R.G."/>
        </authorList>
    </citation>
    <scope>NUCLEOTIDE SEQUENCE [LARGE SCALE GENOMIC DNA]</scope>
    <source>
        <strain>ATCC BAA-935 / AF2122/97</strain>
    </source>
</reference>
<reference key="2">
    <citation type="journal article" date="2017" name="Genome Announc.">
        <title>Updated reference genome sequence and annotation of Mycobacterium bovis AF2122/97.</title>
        <authorList>
            <person name="Malone K.M."/>
            <person name="Farrell D."/>
            <person name="Stuber T.P."/>
            <person name="Schubert O.T."/>
            <person name="Aebersold R."/>
            <person name="Robbe-Austerman S."/>
            <person name="Gordon S.V."/>
        </authorList>
    </citation>
    <scope>NUCLEOTIDE SEQUENCE [LARGE SCALE GENOMIC DNA]</scope>
    <scope>GENOME REANNOTATION</scope>
    <source>
        <strain>ATCC BAA-935 / AF2122/97</strain>
    </source>
</reference>
<feature type="chain" id="PRO_0000245717" description="NADH-quinone oxidoreductase subunit I">
    <location>
        <begin position="1"/>
        <end position="211"/>
    </location>
</feature>
<feature type="domain" description="4Fe-4S ferredoxin-type 1" evidence="1">
    <location>
        <begin position="71"/>
        <end position="101"/>
    </location>
</feature>
<feature type="domain" description="4Fe-4S ferredoxin-type 2" evidence="1">
    <location>
        <begin position="117"/>
        <end position="146"/>
    </location>
</feature>
<feature type="region of interest" description="Disordered" evidence="2">
    <location>
        <begin position="1"/>
        <end position="27"/>
    </location>
</feature>
<feature type="binding site" evidence="1">
    <location>
        <position position="81"/>
    </location>
    <ligand>
        <name>[4Fe-4S] cluster</name>
        <dbReference type="ChEBI" id="CHEBI:49883"/>
        <label>1</label>
    </ligand>
</feature>
<feature type="binding site" evidence="1">
    <location>
        <position position="84"/>
    </location>
    <ligand>
        <name>[4Fe-4S] cluster</name>
        <dbReference type="ChEBI" id="CHEBI:49883"/>
        <label>1</label>
    </ligand>
</feature>
<feature type="binding site" evidence="1">
    <location>
        <position position="87"/>
    </location>
    <ligand>
        <name>[4Fe-4S] cluster</name>
        <dbReference type="ChEBI" id="CHEBI:49883"/>
        <label>1</label>
    </ligand>
</feature>
<feature type="binding site" evidence="1">
    <location>
        <position position="91"/>
    </location>
    <ligand>
        <name>[4Fe-4S] cluster</name>
        <dbReference type="ChEBI" id="CHEBI:49883"/>
        <label>2</label>
    </ligand>
</feature>
<feature type="binding site" evidence="1">
    <location>
        <position position="126"/>
    </location>
    <ligand>
        <name>[4Fe-4S] cluster</name>
        <dbReference type="ChEBI" id="CHEBI:49883"/>
        <label>2</label>
    </ligand>
</feature>
<feature type="binding site" evidence="1">
    <location>
        <position position="129"/>
    </location>
    <ligand>
        <name>[4Fe-4S] cluster</name>
        <dbReference type="ChEBI" id="CHEBI:49883"/>
        <label>2</label>
    </ligand>
</feature>
<feature type="binding site" evidence="1">
    <location>
        <position position="132"/>
    </location>
    <ligand>
        <name>[4Fe-4S] cluster</name>
        <dbReference type="ChEBI" id="CHEBI:49883"/>
        <label>2</label>
    </ligand>
</feature>
<feature type="binding site" evidence="1">
    <location>
        <position position="136"/>
    </location>
    <ligand>
        <name>[4Fe-4S] cluster</name>
        <dbReference type="ChEBI" id="CHEBI:49883"/>
        <label>1</label>
    </ligand>
</feature>
<keyword id="KW-0004">4Fe-4S</keyword>
<keyword id="KW-1003">Cell membrane</keyword>
<keyword id="KW-0408">Iron</keyword>
<keyword id="KW-0411">Iron-sulfur</keyword>
<keyword id="KW-0472">Membrane</keyword>
<keyword id="KW-0479">Metal-binding</keyword>
<keyword id="KW-0520">NAD</keyword>
<keyword id="KW-0874">Quinone</keyword>
<keyword id="KW-1185">Reference proteome</keyword>
<keyword id="KW-0677">Repeat</keyword>
<keyword id="KW-1278">Translocase</keyword>
<comment type="function">
    <text evidence="1">NDH-1 shuttles electrons from NADH, via FMN and iron-sulfur (Fe-S) centers, to quinones in the respiratory chain. The immediate electron acceptor for the enzyme in this species is believed to be menaquinone. Couples the redox reaction to proton translocation (for every two electrons transferred, four hydrogen ions are translocated across the cytoplasmic membrane), and thus conserves the redox energy in a proton gradient.</text>
</comment>
<comment type="catalytic activity">
    <reaction evidence="1">
        <text>a quinone + NADH + 5 H(+)(in) = a quinol + NAD(+) + 4 H(+)(out)</text>
        <dbReference type="Rhea" id="RHEA:57888"/>
        <dbReference type="ChEBI" id="CHEBI:15378"/>
        <dbReference type="ChEBI" id="CHEBI:24646"/>
        <dbReference type="ChEBI" id="CHEBI:57540"/>
        <dbReference type="ChEBI" id="CHEBI:57945"/>
        <dbReference type="ChEBI" id="CHEBI:132124"/>
    </reaction>
</comment>
<comment type="cofactor">
    <cofactor evidence="1">
        <name>[4Fe-4S] cluster</name>
        <dbReference type="ChEBI" id="CHEBI:49883"/>
    </cofactor>
    <text evidence="1">Binds 2 [4Fe-4S] clusters per subunit.</text>
</comment>
<comment type="subunit">
    <text evidence="1">NDH-1 is composed of 14 different subunits. Subunits NuoA, H, J, K, L, M, N constitute the membrane sector of the complex.</text>
</comment>
<comment type="subcellular location">
    <subcellularLocation>
        <location evidence="1">Cell membrane</location>
        <topology evidence="1">Peripheral membrane protein</topology>
    </subcellularLocation>
</comment>
<comment type="similarity">
    <text evidence="1">Belongs to the complex I 23 kDa subunit family.</text>
</comment>
<gene>
    <name evidence="1" type="primary">nuoI</name>
    <name type="ordered locus">BQ2027_MB3177</name>
</gene>
<evidence type="ECO:0000255" key="1">
    <source>
        <dbReference type="HAMAP-Rule" id="MF_01351"/>
    </source>
</evidence>
<evidence type="ECO:0000256" key="2">
    <source>
        <dbReference type="SAM" id="MobiDB-lite"/>
    </source>
</evidence>
<name>NUOI_MYCBO</name>
<protein>
    <recommendedName>
        <fullName evidence="1">NADH-quinone oxidoreductase subunit I</fullName>
        <ecNumber evidence="1">7.1.1.-</ecNumber>
    </recommendedName>
    <alternativeName>
        <fullName evidence="1">NADH dehydrogenase I subunit I</fullName>
    </alternativeName>
    <alternativeName>
        <fullName evidence="1">NDH-1 subunit I</fullName>
    </alternativeName>
</protein>
<proteinExistence type="inferred from homology"/>
<sequence>MANTDRPALPHKRAVPPSRADSGPRRRRTKLLDAVAGFGVTLGSMFKKTVTEEYPERPGPVAARYHGRHQLNRYPDGLEKCIGCELCAWACPADAIYVEGADNTEEERFSPGERYGRVYQINYLRCIGCGLCIEACPTRALTMTYDYELADDNRADLIYEKDRLLAPLLPEMAAPPHPRAPGATDKDYYLGNVTAEGLRGVRESQTTGDSR</sequence>
<organism>
    <name type="scientific">Mycobacterium bovis (strain ATCC BAA-935 / AF2122/97)</name>
    <dbReference type="NCBI Taxonomy" id="233413"/>
    <lineage>
        <taxon>Bacteria</taxon>
        <taxon>Bacillati</taxon>
        <taxon>Actinomycetota</taxon>
        <taxon>Actinomycetes</taxon>
        <taxon>Mycobacteriales</taxon>
        <taxon>Mycobacteriaceae</taxon>
        <taxon>Mycobacterium</taxon>
        <taxon>Mycobacterium tuberculosis complex</taxon>
    </lineage>
</organism>
<dbReference type="EC" id="7.1.1.-" evidence="1"/>
<dbReference type="EMBL" id="LT708304">
    <property type="protein sequence ID" value="SIU01804.1"/>
    <property type="molecule type" value="Genomic_DNA"/>
</dbReference>
<dbReference type="RefSeq" id="NP_856822.1">
    <property type="nucleotide sequence ID" value="NC_002945.3"/>
</dbReference>
<dbReference type="RefSeq" id="WP_003416447.1">
    <property type="nucleotide sequence ID" value="NC_002945.4"/>
</dbReference>
<dbReference type="SMR" id="Q7TX57"/>
<dbReference type="KEGG" id="mbo:BQ2027_MB3177"/>
<dbReference type="PATRIC" id="fig|233413.5.peg.3495"/>
<dbReference type="Proteomes" id="UP000001419">
    <property type="component" value="Chromosome"/>
</dbReference>
<dbReference type="GO" id="GO:0005886">
    <property type="term" value="C:plasma membrane"/>
    <property type="evidence" value="ECO:0007669"/>
    <property type="project" value="UniProtKB-SubCell"/>
</dbReference>
<dbReference type="GO" id="GO:0051539">
    <property type="term" value="F:4 iron, 4 sulfur cluster binding"/>
    <property type="evidence" value="ECO:0007669"/>
    <property type="project" value="UniProtKB-KW"/>
</dbReference>
<dbReference type="GO" id="GO:0005506">
    <property type="term" value="F:iron ion binding"/>
    <property type="evidence" value="ECO:0007669"/>
    <property type="project" value="UniProtKB-UniRule"/>
</dbReference>
<dbReference type="GO" id="GO:0050136">
    <property type="term" value="F:NADH:ubiquinone reductase (non-electrogenic) activity"/>
    <property type="evidence" value="ECO:0007669"/>
    <property type="project" value="UniProtKB-UniRule"/>
</dbReference>
<dbReference type="GO" id="GO:0048038">
    <property type="term" value="F:quinone binding"/>
    <property type="evidence" value="ECO:0007669"/>
    <property type="project" value="UniProtKB-KW"/>
</dbReference>
<dbReference type="GO" id="GO:0009060">
    <property type="term" value="P:aerobic respiration"/>
    <property type="evidence" value="ECO:0007669"/>
    <property type="project" value="TreeGrafter"/>
</dbReference>
<dbReference type="FunFam" id="3.30.70.3270:FF:000007">
    <property type="entry name" value="NADH-quinone oxidoreductase subunit I"/>
    <property type="match status" value="1"/>
</dbReference>
<dbReference type="Gene3D" id="3.30.70.3270">
    <property type="match status" value="1"/>
</dbReference>
<dbReference type="HAMAP" id="MF_01351">
    <property type="entry name" value="NDH1_NuoI"/>
    <property type="match status" value="1"/>
</dbReference>
<dbReference type="InterPro" id="IPR017896">
    <property type="entry name" value="4Fe4S_Fe-S-bd"/>
</dbReference>
<dbReference type="InterPro" id="IPR017900">
    <property type="entry name" value="4Fe4S_Fe_S_CS"/>
</dbReference>
<dbReference type="InterPro" id="IPR010226">
    <property type="entry name" value="NADH_quinone_OxRdtase_chainI"/>
</dbReference>
<dbReference type="NCBIfam" id="TIGR01971">
    <property type="entry name" value="NuoI"/>
    <property type="match status" value="1"/>
</dbReference>
<dbReference type="NCBIfam" id="NF004537">
    <property type="entry name" value="PRK05888.1-3"/>
    <property type="match status" value="1"/>
</dbReference>
<dbReference type="PANTHER" id="PTHR10849:SF20">
    <property type="entry name" value="NADH DEHYDROGENASE [UBIQUINONE] IRON-SULFUR PROTEIN 8, MITOCHONDRIAL"/>
    <property type="match status" value="1"/>
</dbReference>
<dbReference type="PANTHER" id="PTHR10849">
    <property type="entry name" value="NADH DEHYDROGENASE UBIQUINONE IRON-SULFUR PROTEIN 8, MITOCHONDRIAL"/>
    <property type="match status" value="1"/>
</dbReference>
<dbReference type="Pfam" id="PF12838">
    <property type="entry name" value="Fer4_7"/>
    <property type="match status" value="1"/>
</dbReference>
<dbReference type="SUPFAM" id="SSF54862">
    <property type="entry name" value="4Fe-4S ferredoxins"/>
    <property type="match status" value="1"/>
</dbReference>
<dbReference type="PROSITE" id="PS00198">
    <property type="entry name" value="4FE4S_FER_1"/>
    <property type="match status" value="2"/>
</dbReference>
<dbReference type="PROSITE" id="PS51379">
    <property type="entry name" value="4FE4S_FER_2"/>
    <property type="match status" value="2"/>
</dbReference>
<accession>Q7TX57</accession>
<accession>A0A1R3Y3A4</accession>
<accession>X2BMR8</accession>